<gene>
    <name type="primary">TSPY8</name>
</gene>
<comment type="function">
    <text evidence="1">May be involved in sperm differentiation and proliferation.</text>
</comment>
<comment type="subcellular location">
    <subcellularLocation>
        <location evidence="1">Cytoplasm</location>
    </subcellularLocation>
    <subcellularLocation>
        <location evidence="1">Nucleus</location>
    </subcellularLocation>
</comment>
<comment type="polymorphism">
    <text evidence="2">Maps to a tandemly repeated region on chromosome Yp11; additionally at least one copy is reported originating from Yq. The gene is thought to be present with an inter-individual variation in copy number and between 20 and 60 copies per Y chromosome are expected. 35 tandemly repeated gene copies on Yp11 originating from one individual have been reported (PubMed:12815422).</text>
</comment>
<comment type="similarity">
    <text evidence="3">Belongs to the nucleosome assembly protein (NAP) family.</text>
</comment>
<protein>
    <recommendedName>
        <fullName>Testis-specific Y-encoded protein 8</fullName>
    </recommendedName>
</protein>
<name>TSPY8_HUMAN</name>
<keyword id="KW-0963">Cytoplasm</keyword>
<keyword id="KW-0217">Developmental protein</keyword>
<keyword id="KW-0221">Differentiation</keyword>
<keyword id="KW-0334">Gonadal differentiation</keyword>
<keyword id="KW-0539">Nucleus</keyword>
<keyword id="KW-1185">Reference proteome</keyword>
<keyword id="KW-0744">Spermatogenesis</keyword>
<evidence type="ECO:0000250" key="1">
    <source>
        <dbReference type="UniProtKB" id="Q01534"/>
    </source>
</evidence>
<evidence type="ECO:0000269" key="2">
    <source>
    </source>
</evidence>
<evidence type="ECO:0000305" key="3"/>
<accession>P0CW00</accession>
<accession>H7BXJ3</accession>
<reference key="1">
    <citation type="journal article" date="2003" name="Nature">
        <title>The male-specific region of the human Y chromosome is a mosaic of discrete sequence classes.</title>
        <authorList>
            <person name="Skaletsky H."/>
            <person name="Kuroda-Kawaguchi T."/>
            <person name="Minx P.J."/>
            <person name="Cordum H.S."/>
            <person name="Hillier L.W."/>
            <person name="Brown L.G."/>
            <person name="Repping S."/>
            <person name="Pyntikova T."/>
            <person name="Ali J."/>
            <person name="Bieri T."/>
            <person name="Chinwalla A."/>
            <person name="Delehaunty A."/>
            <person name="Delehaunty K."/>
            <person name="Du H."/>
            <person name="Fewell G."/>
            <person name="Fulton L."/>
            <person name="Fulton R."/>
            <person name="Graves T.A."/>
            <person name="Hou S.-F."/>
            <person name="Latrielle P."/>
            <person name="Leonard S."/>
            <person name="Mardis E."/>
            <person name="Maupin R."/>
            <person name="McPherson J."/>
            <person name="Miner T."/>
            <person name="Nash W."/>
            <person name="Nguyen C."/>
            <person name="Ozersky P."/>
            <person name="Pepin K."/>
            <person name="Rock S."/>
            <person name="Rohlfing T."/>
            <person name="Scott K."/>
            <person name="Schultz B."/>
            <person name="Strong C."/>
            <person name="Tin-Wollam A."/>
            <person name="Yang S.-P."/>
            <person name="Waterston R.H."/>
            <person name="Wilson R.K."/>
            <person name="Rozen S."/>
            <person name="Page D.C."/>
        </authorList>
    </citation>
    <scope>NUCLEOTIDE SEQUENCE [LARGE SCALE GENOMIC DNA]</scope>
</reference>
<sequence length="308" mass="35147">MRPEGSLTYWVPERLRQGFCGVGRAAQALVCASAKEGTAFRMEAVQEGAAGVESEQAALGEEAVLLLDDIMAEVEVVAEEEGLVERREEAQRAQQAVPGPGPMTPESALEELLAVQVELEPVNAQARKAFSRQREKMERRRKPHLDRRGAVIQSVPGFWANVIANHPQMSALITDEDEDMLSYMVSLEVEEEKHPVHLCKIMLFFRSNPYFQNKVITKEYLVNITEYRASHSTPIEWYLDYEVEAYRRRHHNSSLNFFNWFSDHNFAGSNKIAEILCKDLWRNPLQYYKRMKPPEEGTETSGDSQLLS</sequence>
<dbReference type="EMBL" id="AC006158">
    <property type="status" value="NOT_ANNOTATED_CDS"/>
    <property type="molecule type" value="Genomic_DNA"/>
</dbReference>
<dbReference type="CCDS" id="CCDS59533.1"/>
<dbReference type="RefSeq" id="NP_001230650.1">
    <property type="nucleotide sequence ID" value="NM_001243721.2"/>
</dbReference>
<dbReference type="SMR" id="P0CW00"/>
<dbReference type="BioGRID" id="608830">
    <property type="interactions" value="2"/>
</dbReference>
<dbReference type="FunCoup" id="P0CW00">
    <property type="interactions" value="52"/>
</dbReference>
<dbReference type="IntAct" id="P0CW00">
    <property type="interactions" value="2"/>
</dbReference>
<dbReference type="BioMuta" id="TSPY8"/>
<dbReference type="DMDM" id="510120716"/>
<dbReference type="jPOST" id="P0CW00"/>
<dbReference type="MassIVE" id="P0CW00"/>
<dbReference type="PeptideAtlas" id="P0CW00"/>
<dbReference type="ProteomicsDB" id="43301"/>
<dbReference type="DNASU" id="728403"/>
<dbReference type="Ensembl" id="ENST00000287721.13">
    <property type="protein sequence ID" value="ENSP00000287721.9"/>
    <property type="gene ID" value="ENSG00000229549.9"/>
</dbReference>
<dbReference type="Ensembl" id="ENST00000707589.1">
    <property type="protein sequence ID" value="ENSP00000516917.1"/>
    <property type="gene ID" value="ENSG00000291455.1"/>
</dbReference>
<dbReference type="GeneID" id="728403"/>
<dbReference type="KEGG" id="hsa:728403"/>
<dbReference type="MANE-Select" id="ENST00000287721.13">
    <property type="protein sequence ID" value="ENSP00000287721.9"/>
    <property type="RefSeq nucleotide sequence ID" value="NM_001243721.2"/>
    <property type="RefSeq protein sequence ID" value="NP_001230650.1"/>
</dbReference>
<dbReference type="UCSC" id="uc004frr.3">
    <property type="organism name" value="human"/>
</dbReference>
<dbReference type="AGR" id="HGNC:37471"/>
<dbReference type="CTD" id="728403"/>
<dbReference type="GeneCards" id="TSPY8"/>
<dbReference type="HGNC" id="HGNC:37471">
    <property type="gene designation" value="TSPY8"/>
</dbReference>
<dbReference type="HPA" id="ENSG00000229549">
    <property type="expression patterns" value="Tissue enriched (testis)"/>
</dbReference>
<dbReference type="neXtProt" id="NX_P0CW00"/>
<dbReference type="VEuPathDB" id="HostDB:ENSG00000229549"/>
<dbReference type="GeneTree" id="ENSGT00940000162417"/>
<dbReference type="InParanoid" id="P0CW00"/>
<dbReference type="OMA" id="HRSAIIR"/>
<dbReference type="PAN-GO" id="P0CW00">
    <property type="GO annotations" value="4 GO annotations based on evolutionary models"/>
</dbReference>
<dbReference type="PhylomeDB" id="P0CW00"/>
<dbReference type="BioGRID-ORCS" id="728403">
    <property type="hits" value="19 hits in 275 CRISPR screens"/>
</dbReference>
<dbReference type="GenomeRNAi" id="728403"/>
<dbReference type="Pharos" id="P0CW00">
    <property type="development level" value="Tdark"/>
</dbReference>
<dbReference type="PRO" id="PR:P0CW00"/>
<dbReference type="Proteomes" id="UP000005640">
    <property type="component" value="Chromosome Y"/>
</dbReference>
<dbReference type="RNAct" id="P0CW00">
    <property type="molecule type" value="protein"/>
</dbReference>
<dbReference type="Bgee" id="ENSG00000229549">
    <property type="expression patterns" value="Expressed in male germ line stem cell (sensu Vertebrata) in testis and 33 other cell types or tissues"/>
</dbReference>
<dbReference type="ExpressionAtlas" id="P0CW00">
    <property type="expression patterns" value="baseline"/>
</dbReference>
<dbReference type="GO" id="GO:0000785">
    <property type="term" value="C:chromatin"/>
    <property type="evidence" value="ECO:0000318"/>
    <property type="project" value="GO_Central"/>
</dbReference>
<dbReference type="GO" id="GO:0005737">
    <property type="term" value="C:cytoplasm"/>
    <property type="evidence" value="ECO:0007669"/>
    <property type="project" value="UniProtKB-SubCell"/>
</dbReference>
<dbReference type="GO" id="GO:0005634">
    <property type="term" value="C:nucleus"/>
    <property type="evidence" value="ECO:0000318"/>
    <property type="project" value="GO_Central"/>
</dbReference>
<dbReference type="GO" id="GO:0003682">
    <property type="term" value="F:chromatin binding"/>
    <property type="evidence" value="ECO:0000318"/>
    <property type="project" value="GO_Central"/>
</dbReference>
<dbReference type="GO" id="GO:0042393">
    <property type="term" value="F:histone binding"/>
    <property type="evidence" value="ECO:0000318"/>
    <property type="project" value="GO_Central"/>
</dbReference>
<dbReference type="GO" id="GO:0030154">
    <property type="term" value="P:cell differentiation"/>
    <property type="evidence" value="ECO:0007669"/>
    <property type="project" value="UniProtKB-KW"/>
</dbReference>
<dbReference type="GO" id="GO:0007506">
    <property type="term" value="P:gonadal mesoderm development"/>
    <property type="evidence" value="ECO:0007669"/>
    <property type="project" value="UniProtKB-KW"/>
</dbReference>
<dbReference type="GO" id="GO:0006334">
    <property type="term" value="P:nucleosome assembly"/>
    <property type="evidence" value="ECO:0007669"/>
    <property type="project" value="InterPro"/>
</dbReference>
<dbReference type="GO" id="GO:0007283">
    <property type="term" value="P:spermatogenesis"/>
    <property type="evidence" value="ECO:0007669"/>
    <property type="project" value="UniProtKB-KW"/>
</dbReference>
<dbReference type="FunFam" id="1.20.5.1500:FF:000007">
    <property type="entry name" value="Testis-specific Y-encoded protein 10"/>
    <property type="match status" value="1"/>
</dbReference>
<dbReference type="FunFam" id="3.30.1120.90:FF:000002">
    <property type="entry name" value="Testis-specific Y-encoded-like protein 2"/>
    <property type="match status" value="1"/>
</dbReference>
<dbReference type="Gene3D" id="1.20.5.1500">
    <property type="match status" value="1"/>
</dbReference>
<dbReference type="Gene3D" id="3.30.1120.90">
    <property type="entry name" value="Nucleosome assembly protein"/>
    <property type="match status" value="1"/>
</dbReference>
<dbReference type="InterPro" id="IPR037231">
    <property type="entry name" value="NAP-like_sf"/>
</dbReference>
<dbReference type="InterPro" id="IPR002164">
    <property type="entry name" value="NAP_family"/>
</dbReference>
<dbReference type="PANTHER" id="PTHR11875">
    <property type="entry name" value="TESTIS-SPECIFIC Y-ENCODED PROTEIN"/>
    <property type="match status" value="1"/>
</dbReference>
<dbReference type="Pfam" id="PF00956">
    <property type="entry name" value="NAP"/>
    <property type="match status" value="1"/>
</dbReference>
<dbReference type="SUPFAM" id="SSF143113">
    <property type="entry name" value="NAP-like"/>
    <property type="match status" value="1"/>
</dbReference>
<feature type="chain" id="PRO_0000408003" description="Testis-specific Y-encoded protein 8">
    <location>
        <begin position="1"/>
        <end position="308"/>
    </location>
</feature>
<proteinExistence type="inferred from homology"/>
<organism>
    <name type="scientific">Homo sapiens</name>
    <name type="common">Human</name>
    <dbReference type="NCBI Taxonomy" id="9606"/>
    <lineage>
        <taxon>Eukaryota</taxon>
        <taxon>Metazoa</taxon>
        <taxon>Chordata</taxon>
        <taxon>Craniata</taxon>
        <taxon>Vertebrata</taxon>
        <taxon>Euteleostomi</taxon>
        <taxon>Mammalia</taxon>
        <taxon>Eutheria</taxon>
        <taxon>Euarchontoglires</taxon>
        <taxon>Primates</taxon>
        <taxon>Haplorrhini</taxon>
        <taxon>Catarrhini</taxon>
        <taxon>Hominidae</taxon>
        <taxon>Homo</taxon>
    </lineage>
</organism>